<evidence type="ECO:0000255" key="1">
    <source>
        <dbReference type="HAMAP-Rule" id="MF_01389"/>
    </source>
</evidence>
<evidence type="ECO:0000256" key="2">
    <source>
        <dbReference type="SAM" id="MobiDB-lite"/>
    </source>
</evidence>
<comment type="function">
    <text evidence="1">Facilitates the functional incorporation of the urease nickel metallocenter. This process requires GTP hydrolysis, probably effectuated by UreG.</text>
</comment>
<comment type="subunit">
    <text evidence="1">Homodimer. UreD, UreF and UreG form a complex that acts as a GTP-hydrolysis-dependent molecular chaperone, activating the urease apoprotein by helping to assemble the nickel containing metallocenter of UreC. The UreE protein probably delivers the nickel.</text>
</comment>
<comment type="subcellular location">
    <subcellularLocation>
        <location evidence="1">Cytoplasm</location>
    </subcellularLocation>
</comment>
<comment type="similarity">
    <text evidence="1">Belongs to the SIMIBI class G3E GTPase family. UreG subfamily.</text>
</comment>
<dbReference type="EMBL" id="AM420293">
    <property type="protein sequence ID" value="CAL99983.1"/>
    <property type="molecule type" value="Genomic_DNA"/>
</dbReference>
<dbReference type="RefSeq" id="WP_009950038.1">
    <property type="nucleotide sequence ID" value="NC_009142.1"/>
</dbReference>
<dbReference type="SMR" id="A4F7F9"/>
<dbReference type="STRING" id="405948.SACE_0638"/>
<dbReference type="KEGG" id="sen:SACE_0638"/>
<dbReference type="eggNOG" id="COG0378">
    <property type="taxonomic scope" value="Bacteria"/>
</dbReference>
<dbReference type="HOGENOM" id="CLU_072144_1_0_11"/>
<dbReference type="OrthoDB" id="9802035at2"/>
<dbReference type="Proteomes" id="UP000006728">
    <property type="component" value="Chromosome"/>
</dbReference>
<dbReference type="GO" id="GO:0005737">
    <property type="term" value="C:cytoplasm"/>
    <property type="evidence" value="ECO:0007669"/>
    <property type="project" value="UniProtKB-SubCell"/>
</dbReference>
<dbReference type="GO" id="GO:0005525">
    <property type="term" value="F:GTP binding"/>
    <property type="evidence" value="ECO:0007669"/>
    <property type="project" value="UniProtKB-KW"/>
</dbReference>
<dbReference type="GO" id="GO:0003924">
    <property type="term" value="F:GTPase activity"/>
    <property type="evidence" value="ECO:0007669"/>
    <property type="project" value="InterPro"/>
</dbReference>
<dbReference type="GO" id="GO:0016151">
    <property type="term" value="F:nickel cation binding"/>
    <property type="evidence" value="ECO:0007669"/>
    <property type="project" value="UniProtKB-UniRule"/>
</dbReference>
<dbReference type="GO" id="GO:0043419">
    <property type="term" value="P:urea catabolic process"/>
    <property type="evidence" value="ECO:0007669"/>
    <property type="project" value="InterPro"/>
</dbReference>
<dbReference type="Gene3D" id="3.40.50.300">
    <property type="entry name" value="P-loop containing nucleotide triphosphate hydrolases"/>
    <property type="match status" value="1"/>
</dbReference>
<dbReference type="HAMAP" id="MF_01389">
    <property type="entry name" value="UreG"/>
    <property type="match status" value="1"/>
</dbReference>
<dbReference type="InterPro" id="IPR003495">
    <property type="entry name" value="CobW/HypB/UreG_nucleotide-bd"/>
</dbReference>
<dbReference type="InterPro" id="IPR027417">
    <property type="entry name" value="P-loop_NTPase"/>
</dbReference>
<dbReference type="InterPro" id="IPR004400">
    <property type="entry name" value="UreG"/>
</dbReference>
<dbReference type="NCBIfam" id="TIGR00101">
    <property type="entry name" value="ureG"/>
    <property type="match status" value="1"/>
</dbReference>
<dbReference type="PANTHER" id="PTHR31715">
    <property type="entry name" value="UREASE ACCESSORY PROTEIN G"/>
    <property type="match status" value="1"/>
</dbReference>
<dbReference type="PANTHER" id="PTHR31715:SF0">
    <property type="entry name" value="UREASE ACCESSORY PROTEIN G"/>
    <property type="match status" value="1"/>
</dbReference>
<dbReference type="Pfam" id="PF02492">
    <property type="entry name" value="cobW"/>
    <property type="match status" value="1"/>
</dbReference>
<dbReference type="SUPFAM" id="SSF52540">
    <property type="entry name" value="P-loop containing nucleoside triphosphate hydrolases"/>
    <property type="match status" value="1"/>
</dbReference>
<gene>
    <name evidence="1" type="primary">ureG1</name>
    <name type="ordered locus">SACE_0638</name>
</gene>
<accession>A4F7F9</accession>
<keyword id="KW-0143">Chaperone</keyword>
<keyword id="KW-0963">Cytoplasm</keyword>
<keyword id="KW-0342">GTP-binding</keyword>
<keyword id="KW-0996">Nickel insertion</keyword>
<keyword id="KW-0547">Nucleotide-binding</keyword>
<keyword id="KW-1185">Reference proteome</keyword>
<organism>
    <name type="scientific">Saccharopolyspora erythraea (strain ATCC 11635 / DSM 40517 / JCM 4748 / NBRC 13426 / NCIMB 8594 / NRRL 2338)</name>
    <dbReference type="NCBI Taxonomy" id="405948"/>
    <lineage>
        <taxon>Bacteria</taxon>
        <taxon>Bacillati</taxon>
        <taxon>Actinomycetota</taxon>
        <taxon>Actinomycetes</taxon>
        <taxon>Pseudonocardiales</taxon>
        <taxon>Pseudonocardiaceae</taxon>
        <taxon>Saccharopolyspora</taxon>
    </lineage>
</organism>
<protein>
    <recommendedName>
        <fullName evidence="1">Urease accessory protein UreG 1</fullName>
    </recommendedName>
</protein>
<name>UREG1_SACEN</name>
<proteinExistence type="inferred from homology"/>
<feature type="chain" id="PRO_0000347445" description="Urease accessory protein UreG 1">
    <location>
        <begin position="1"/>
        <end position="248"/>
    </location>
</feature>
<feature type="region of interest" description="Disordered" evidence="2">
    <location>
        <begin position="1"/>
        <end position="36"/>
    </location>
</feature>
<feature type="compositionally biased region" description="Basic and acidic residues" evidence="2">
    <location>
        <begin position="1"/>
        <end position="14"/>
    </location>
</feature>
<feature type="binding site" evidence="1">
    <location>
        <begin position="53"/>
        <end position="60"/>
    </location>
    <ligand>
        <name>GTP</name>
        <dbReference type="ChEBI" id="CHEBI:37565"/>
    </ligand>
</feature>
<reference key="1">
    <citation type="journal article" date="2007" name="Nat. Biotechnol.">
        <title>Complete genome sequence of the erythromycin-producing bacterium Saccharopolyspora erythraea NRRL23338.</title>
        <authorList>
            <person name="Oliynyk M."/>
            <person name="Samborskyy M."/>
            <person name="Lester J.B."/>
            <person name="Mironenko T."/>
            <person name="Scott N."/>
            <person name="Dickens S."/>
            <person name="Haydock S.F."/>
            <person name="Leadlay P.F."/>
        </authorList>
    </citation>
    <scope>NUCLEOTIDE SEQUENCE [LARGE SCALE GENOMIC DNA]</scope>
    <source>
        <strain>ATCC 11635 / DSM 40517 / JCM 4748 / NBRC 13426 / NCIMB 8594 / NRRL 2338</strain>
    </source>
</reference>
<sequence length="248" mass="25950">MLPEHHDHGHEHGGNGHGHGHRHQVNFDPTAAEPDPYGVAPRGGRAFRLGIGGPVGSGKTALTAALCRALGSEVNLAVVTNDIYTTEDADFLRRAGVLDTDRIEAVQTGACPHTAIRDDITANLDAVEKLEERHPGLELVIVESGGDNLTAVFSRGLADSQVFVVDVAGGDKVPRKGGPGVTTADLLVINKVDLAEQVGADMAVMVADAHRMRGELPVITQSLTRTPNAPDVSAWVRQQLAAGVVVGA</sequence>